<comment type="subcellular location">
    <subcellularLocation>
        <location evidence="1">Cytoplasm</location>
    </subcellularLocation>
</comment>
<accession>P0A986</accession>
<accession>P77605</accession>
<keyword id="KW-0010">Activator</keyword>
<keyword id="KW-0963">Cytoplasm</keyword>
<keyword id="KW-0238">DNA-binding</keyword>
<keyword id="KW-1185">Reference proteome</keyword>
<keyword id="KW-0804">Transcription</keyword>
<keyword id="KW-0805">Transcription regulation</keyword>
<sequence>MSNKMTGLVKWFNPEKGFGFITPKDGSKDVFVHFSAIQSNDFKTLTENQEVEFGIENGPKGPAAVHVVAL</sequence>
<name>CSPI_ECOLI</name>
<protein>
    <recommendedName>
        <fullName>Cold shock-like protein CspI</fullName>
        <shortName>CPS-I</shortName>
    </recommendedName>
</protein>
<reference key="1">
    <citation type="journal article" date="1996" name="DNA Res.">
        <title>A 570-kb DNA sequence of the Escherichia coli K-12 genome corresponding to the 28.0-40.1 min region on the linkage map.</title>
        <authorList>
            <person name="Aiba H."/>
            <person name="Baba T."/>
            <person name="Fujita K."/>
            <person name="Hayashi K."/>
            <person name="Inada T."/>
            <person name="Isono K."/>
            <person name="Itoh T."/>
            <person name="Kasai H."/>
            <person name="Kashimoto K."/>
            <person name="Kimura S."/>
            <person name="Kitakawa M."/>
            <person name="Kitagawa M."/>
            <person name="Makino K."/>
            <person name="Miki T."/>
            <person name="Mizobuchi K."/>
            <person name="Mori H."/>
            <person name="Mori T."/>
            <person name="Motomura K."/>
            <person name="Nakade S."/>
            <person name="Nakamura Y."/>
            <person name="Nashimoto H."/>
            <person name="Nishio Y."/>
            <person name="Oshima T."/>
            <person name="Saito N."/>
            <person name="Sampei G."/>
            <person name="Seki Y."/>
            <person name="Sivasundaram S."/>
            <person name="Tagami H."/>
            <person name="Takeda J."/>
            <person name="Takemoto K."/>
            <person name="Takeuchi Y."/>
            <person name="Wada C."/>
            <person name="Yamamoto Y."/>
            <person name="Horiuchi T."/>
        </authorList>
    </citation>
    <scope>NUCLEOTIDE SEQUENCE [LARGE SCALE GENOMIC DNA]</scope>
    <source>
        <strain>K12 / W3110 / ATCC 27325 / DSM 5911</strain>
    </source>
</reference>
<reference key="2">
    <citation type="journal article" date="1997" name="Science">
        <title>The complete genome sequence of Escherichia coli K-12.</title>
        <authorList>
            <person name="Blattner F.R."/>
            <person name="Plunkett G. III"/>
            <person name="Bloch C.A."/>
            <person name="Perna N.T."/>
            <person name="Burland V."/>
            <person name="Riley M."/>
            <person name="Collado-Vides J."/>
            <person name="Glasner J.D."/>
            <person name="Rode C.K."/>
            <person name="Mayhew G.F."/>
            <person name="Gregor J."/>
            <person name="Davis N.W."/>
            <person name="Kirkpatrick H.A."/>
            <person name="Goeden M.A."/>
            <person name="Rose D.J."/>
            <person name="Mau B."/>
            <person name="Shao Y."/>
        </authorList>
    </citation>
    <scope>NUCLEOTIDE SEQUENCE [LARGE SCALE GENOMIC DNA]</scope>
    <source>
        <strain>K12 / MG1655 / ATCC 47076</strain>
    </source>
</reference>
<reference key="3">
    <citation type="journal article" date="2006" name="Mol. Syst. Biol.">
        <title>Highly accurate genome sequences of Escherichia coli K-12 strains MG1655 and W3110.</title>
        <authorList>
            <person name="Hayashi K."/>
            <person name="Morooka N."/>
            <person name="Yamamoto Y."/>
            <person name="Fujita K."/>
            <person name="Isono K."/>
            <person name="Choi S."/>
            <person name="Ohtsubo E."/>
            <person name="Baba T."/>
            <person name="Wanner B.L."/>
            <person name="Mori H."/>
            <person name="Horiuchi T."/>
        </authorList>
    </citation>
    <scope>NUCLEOTIDE SEQUENCE [LARGE SCALE GENOMIC DNA]</scope>
    <source>
        <strain>K12 / W3110 / ATCC 27325 / DSM 5911</strain>
    </source>
</reference>
<proteinExistence type="inferred from homology"/>
<feature type="chain" id="PRO_0000100272" description="Cold shock-like protein CspI">
    <location>
        <begin position="1"/>
        <end position="70"/>
    </location>
</feature>
<feature type="domain" description="CSD">
    <location>
        <begin position="7"/>
        <end position="67"/>
    </location>
</feature>
<dbReference type="EMBL" id="U00096">
    <property type="protein sequence ID" value="AAC74625.1"/>
    <property type="molecule type" value="Genomic_DNA"/>
</dbReference>
<dbReference type="EMBL" id="AP009048">
    <property type="protein sequence ID" value="BAA15254.1"/>
    <property type="molecule type" value="Genomic_DNA"/>
</dbReference>
<dbReference type="PIR" id="C64910">
    <property type="entry name" value="C64910"/>
</dbReference>
<dbReference type="RefSeq" id="NP_416070.1">
    <property type="nucleotide sequence ID" value="NC_000913.3"/>
</dbReference>
<dbReference type="RefSeq" id="WP_000066495.1">
    <property type="nucleotide sequence ID" value="NZ_SSUV01000066.1"/>
</dbReference>
<dbReference type="SMR" id="P0A986"/>
<dbReference type="BioGRID" id="4260240">
    <property type="interactions" value="356"/>
</dbReference>
<dbReference type="DIP" id="DIP-48195N"/>
<dbReference type="FunCoup" id="P0A986">
    <property type="interactions" value="420"/>
</dbReference>
<dbReference type="IntAct" id="P0A986">
    <property type="interactions" value="17"/>
</dbReference>
<dbReference type="STRING" id="511145.b1552"/>
<dbReference type="PaxDb" id="511145-b1552"/>
<dbReference type="EnsemblBacteria" id="AAC74625">
    <property type="protein sequence ID" value="AAC74625"/>
    <property type="gene ID" value="b1552"/>
</dbReference>
<dbReference type="GeneID" id="86859682"/>
<dbReference type="GeneID" id="946099"/>
<dbReference type="KEGG" id="ecj:JW1544"/>
<dbReference type="KEGG" id="eco:b1552"/>
<dbReference type="KEGG" id="ecoc:C3026_08960"/>
<dbReference type="PATRIC" id="fig|1411691.4.peg.712"/>
<dbReference type="EchoBASE" id="EB3636"/>
<dbReference type="eggNOG" id="COG1278">
    <property type="taxonomic scope" value="Bacteria"/>
</dbReference>
<dbReference type="HOGENOM" id="CLU_117621_2_1_6"/>
<dbReference type="InParanoid" id="P0A986"/>
<dbReference type="OMA" id="HFRAINT"/>
<dbReference type="OrthoDB" id="9810590at2"/>
<dbReference type="PhylomeDB" id="P0A986"/>
<dbReference type="BioCyc" id="EcoCyc:G6825-MONOMER"/>
<dbReference type="PRO" id="PR:P0A986"/>
<dbReference type="Proteomes" id="UP000000625">
    <property type="component" value="Chromosome"/>
</dbReference>
<dbReference type="GO" id="GO:0005829">
    <property type="term" value="C:cytosol"/>
    <property type="evidence" value="ECO:0000314"/>
    <property type="project" value="EcoCyc"/>
</dbReference>
<dbReference type="GO" id="GO:0003677">
    <property type="term" value="F:DNA binding"/>
    <property type="evidence" value="ECO:0007669"/>
    <property type="project" value="UniProtKB-KW"/>
</dbReference>
<dbReference type="GO" id="GO:0003676">
    <property type="term" value="F:nucleic acid binding"/>
    <property type="evidence" value="ECO:0000318"/>
    <property type="project" value="GO_Central"/>
</dbReference>
<dbReference type="GO" id="GO:0010468">
    <property type="term" value="P:regulation of gene expression"/>
    <property type="evidence" value="ECO:0000318"/>
    <property type="project" value="GO_Central"/>
</dbReference>
<dbReference type="GO" id="GO:0009409">
    <property type="term" value="P:response to cold"/>
    <property type="evidence" value="ECO:0000314"/>
    <property type="project" value="EcoliWiki"/>
</dbReference>
<dbReference type="CDD" id="cd04458">
    <property type="entry name" value="CSP_CDS"/>
    <property type="match status" value="1"/>
</dbReference>
<dbReference type="FunFam" id="2.40.50.140:FF:000006">
    <property type="entry name" value="Cold shock protein CspC"/>
    <property type="match status" value="1"/>
</dbReference>
<dbReference type="Gene3D" id="2.40.50.140">
    <property type="entry name" value="Nucleic acid-binding proteins"/>
    <property type="match status" value="1"/>
</dbReference>
<dbReference type="InterPro" id="IPR012156">
    <property type="entry name" value="Cold_shock_CspA"/>
</dbReference>
<dbReference type="InterPro" id="IPR050181">
    <property type="entry name" value="Cold_shock_domain"/>
</dbReference>
<dbReference type="InterPro" id="IPR011129">
    <property type="entry name" value="CSD"/>
</dbReference>
<dbReference type="InterPro" id="IPR019844">
    <property type="entry name" value="CSD_CS"/>
</dbReference>
<dbReference type="InterPro" id="IPR002059">
    <property type="entry name" value="CSP_DNA-bd"/>
</dbReference>
<dbReference type="InterPro" id="IPR012340">
    <property type="entry name" value="NA-bd_OB-fold"/>
</dbReference>
<dbReference type="PANTHER" id="PTHR11544">
    <property type="entry name" value="COLD SHOCK DOMAIN CONTAINING PROTEINS"/>
    <property type="match status" value="1"/>
</dbReference>
<dbReference type="Pfam" id="PF00313">
    <property type="entry name" value="CSD"/>
    <property type="match status" value="1"/>
</dbReference>
<dbReference type="PIRSF" id="PIRSF002599">
    <property type="entry name" value="Cold_shock_A"/>
    <property type="match status" value="1"/>
</dbReference>
<dbReference type="PRINTS" id="PR00050">
    <property type="entry name" value="COLDSHOCK"/>
</dbReference>
<dbReference type="SMART" id="SM00357">
    <property type="entry name" value="CSP"/>
    <property type="match status" value="1"/>
</dbReference>
<dbReference type="SUPFAM" id="SSF50249">
    <property type="entry name" value="Nucleic acid-binding proteins"/>
    <property type="match status" value="1"/>
</dbReference>
<dbReference type="PROSITE" id="PS00352">
    <property type="entry name" value="CSD_1"/>
    <property type="match status" value="1"/>
</dbReference>
<dbReference type="PROSITE" id="PS51857">
    <property type="entry name" value="CSD_2"/>
    <property type="match status" value="1"/>
</dbReference>
<organism>
    <name type="scientific">Escherichia coli (strain K12)</name>
    <dbReference type="NCBI Taxonomy" id="83333"/>
    <lineage>
        <taxon>Bacteria</taxon>
        <taxon>Pseudomonadati</taxon>
        <taxon>Pseudomonadota</taxon>
        <taxon>Gammaproteobacteria</taxon>
        <taxon>Enterobacterales</taxon>
        <taxon>Enterobacteriaceae</taxon>
        <taxon>Escherichia</taxon>
    </lineage>
</organism>
<gene>
    <name type="primary">cspI</name>
    <name type="synonym">cspJ</name>
    <name type="ordered locus">b1552</name>
    <name type="ordered locus">JW1544</name>
</gene>
<evidence type="ECO:0000250" key="1"/>